<protein>
    <recommendedName>
        <fullName>Phenol-soluble modulin alpha 1 peptide</fullName>
    </recommendedName>
</protein>
<dbReference type="EMBL" id="CP000046">
    <property type="status" value="NOT_ANNOTATED_CDS"/>
    <property type="molecule type" value="Genomic_DNA"/>
</dbReference>
<dbReference type="SMR" id="P0C7Y4"/>
<dbReference type="Proteomes" id="UP000000530">
    <property type="component" value="Chromosome"/>
</dbReference>
<dbReference type="GO" id="GO:0031640">
    <property type="term" value="P:killing of cells of another organism"/>
    <property type="evidence" value="ECO:0007669"/>
    <property type="project" value="UniProtKB-KW"/>
</dbReference>
<dbReference type="InterPro" id="IPR031429">
    <property type="entry name" value="PSM_alpha"/>
</dbReference>
<dbReference type="NCBIfam" id="NF033425">
    <property type="entry name" value="PSM_alpha_1_2"/>
    <property type="match status" value="1"/>
</dbReference>
<dbReference type="Pfam" id="PF17063">
    <property type="entry name" value="PSMalpha"/>
    <property type="match status" value="1"/>
</dbReference>
<comment type="function">
    <text evidence="1">Peptide which can recruit, activate and subsequently lyse human neutrophils, thus eliminating the main cellular defense against infection.</text>
</comment>
<comment type="similarity">
    <text evidence="2">Belongs to the phenol-soluble modulin alpha peptides family.</text>
</comment>
<evidence type="ECO:0000250" key="1">
    <source>
        <dbReference type="UniProtKB" id="A9JX05"/>
    </source>
</evidence>
<evidence type="ECO:0000305" key="2"/>
<proteinExistence type="inferred from homology"/>
<gene>
    <name type="primary">psmA1</name>
    <name type="ordered locus">SACOL0493.4</name>
</gene>
<organism>
    <name type="scientific">Staphylococcus aureus (strain COL)</name>
    <dbReference type="NCBI Taxonomy" id="93062"/>
    <lineage>
        <taxon>Bacteria</taxon>
        <taxon>Bacillati</taxon>
        <taxon>Bacillota</taxon>
        <taxon>Bacilli</taxon>
        <taxon>Bacillales</taxon>
        <taxon>Staphylococcaceae</taxon>
        <taxon>Staphylococcus</taxon>
    </lineage>
</organism>
<keyword id="KW-0204">Cytolysis</keyword>
<keyword id="KW-0843">Virulence</keyword>
<sequence length="21" mass="2260">MGIIAGIIKVIKSLIEQFTGK</sequence>
<accession>P0C7Y4</accession>
<name>PSMA1_STAAC</name>
<reference key="1">
    <citation type="journal article" date="2005" name="J. Bacteriol.">
        <title>Insights on evolution of virulence and resistance from the complete genome analysis of an early methicillin-resistant Staphylococcus aureus strain and a biofilm-producing methicillin-resistant Staphylococcus epidermidis strain.</title>
        <authorList>
            <person name="Gill S.R."/>
            <person name="Fouts D.E."/>
            <person name="Archer G.L."/>
            <person name="Mongodin E.F."/>
            <person name="DeBoy R.T."/>
            <person name="Ravel J."/>
            <person name="Paulsen I.T."/>
            <person name="Kolonay J.F."/>
            <person name="Brinkac L.M."/>
            <person name="Beanan M.J."/>
            <person name="Dodson R.J."/>
            <person name="Daugherty S.C."/>
            <person name="Madupu R."/>
            <person name="Angiuoli S.V."/>
            <person name="Durkin A.S."/>
            <person name="Haft D.H."/>
            <person name="Vamathevan J.J."/>
            <person name="Khouri H."/>
            <person name="Utterback T.R."/>
            <person name="Lee C."/>
            <person name="Dimitrov G."/>
            <person name="Jiang L."/>
            <person name="Qin H."/>
            <person name="Weidman J."/>
            <person name="Tran K."/>
            <person name="Kang K.H."/>
            <person name="Hance I.R."/>
            <person name="Nelson K.E."/>
            <person name="Fraser C.M."/>
        </authorList>
    </citation>
    <scope>NUCLEOTIDE SEQUENCE [LARGE SCALE GENOMIC DNA]</scope>
    <source>
        <strain>COL</strain>
    </source>
</reference>
<feature type="peptide" id="PRO_0000345035" description="Phenol-soluble modulin alpha 1 peptide">
    <location>
        <begin position="1"/>
        <end position="21"/>
    </location>
</feature>